<protein>
    <recommendedName>
        <fullName evidence="10">Melanoma-associated antigen 6</fullName>
    </recommendedName>
    <alternativeName>
        <fullName>Cancer/testis antigen 1.6</fullName>
        <shortName>CT1.6</shortName>
    </alternativeName>
    <alternativeName>
        <fullName evidence="9">MAGE-6 antigen</fullName>
    </alternativeName>
    <alternativeName>
        <fullName>MAGE3B antigen</fullName>
    </alternativeName>
</protein>
<organism>
    <name type="scientific">Homo sapiens</name>
    <name type="common">Human</name>
    <dbReference type="NCBI Taxonomy" id="9606"/>
    <lineage>
        <taxon>Eukaryota</taxon>
        <taxon>Metazoa</taxon>
        <taxon>Chordata</taxon>
        <taxon>Craniata</taxon>
        <taxon>Vertebrata</taxon>
        <taxon>Euteleostomi</taxon>
        <taxon>Mammalia</taxon>
        <taxon>Eutheria</taxon>
        <taxon>Euarchontoglires</taxon>
        <taxon>Primates</taxon>
        <taxon>Haplorrhini</taxon>
        <taxon>Catarrhini</taxon>
        <taxon>Hominidae</taxon>
        <taxon>Homo</taxon>
    </lineage>
</organism>
<proteinExistence type="evidence at protein level"/>
<reference key="1">
    <citation type="journal article" date="1994" name="Immunogenetics">
        <title>Structure, chromosomal localization, and expression of 12 genes of the MAGE family.</title>
        <authorList>
            <person name="De Plaen E."/>
            <person name="Arden K."/>
            <person name="Traversari C."/>
            <person name="Gaforio J.J."/>
            <person name="Szikora J.-P."/>
            <person name="De Smet C."/>
            <person name="Brasseur F."/>
            <person name="van der Bruggen P."/>
            <person name="Lethe B.G."/>
            <person name="Lurquin C."/>
            <person name="Brasseur R."/>
            <person name="Chomez P."/>
            <person name="de Backer O."/>
            <person name="Cavenee W."/>
            <person name="Boon T."/>
        </authorList>
    </citation>
    <scope>NUCLEOTIDE SEQUENCE [GENOMIC DNA]</scope>
</reference>
<reference key="2">
    <citation type="journal article" date="1994" name="Biochem. Biophys. Res. Commun.">
        <title>Cloning and analysis of MAGE-1-related genes.</title>
        <authorList>
            <person name="Ding M."/>
            <person name="Beck R.J."/>
            <person name="Keller C.J."/>
            <person name="Fenton R.G."/>
        </authorList>
    </citation>
    <scope>NUCLEOTIDE SEQUENCE [MRNA]</scope>
    <source>
        <tissue>Skin</tissue>
    </source>
</reference>
<reference key="3">
    <citation type="journal article" date="1995" name="Gene">
        <title>Sequence analysis of the MAGE gene family encoding human tumor-rejection antigens.</title>
        <authorList>
            <person name="Imai Y."/>
            <person name="Shichijo S."/>
            <person name="Yamada A."/>
            <person name="Katayama T."/>
            <person name="Yano H."/>
            <person name="Itoh K."/>
        </authorList>
    </citation>
    <scope>NUCLEOTIDE SEQUENCE [MRNA]</scope>
</reference>
<reference key="4">
    <citation type="submission" date="2007-09" db="EMBL/GenBank/DDBJ databases">
        <title>The isolation and characterization of melanoma antigen 6 (MAGE-6).</title>
        <authorList>
            <person name="Mastutik G."/>
            <person name="Putra S.T."/>
            <person name="Soetjipto S."/>
            <person name="Kusumobroto H.O."/>
            <person name="Hardjowijoto S."/>
            <person name="Lunardi J.H."/>
            <person name="Puspaningsih N.N.T."/>
        </authorList>
    </citation>
    <scope>NUCLEOTIDE SEQUENCE [MRNA]</scope>
    <source>
        <tissue>Testis</tissue>
    </source>
</reference>
<reference key="5">
    <citation type="journal article" date="2007" name="BMC Genomics">
        <title>The full-ORF clone resource of the German cDNA consortium.</title>
        <authorList>
            <person name="Bechtel S."/>
            <person name="Rosenfelder H."/>
            <person name="Duda A."/>
            <person name="Schmidt C.P."/>
            <person name="Ernst U."/>
            <person name="Wellenreuther R."/>
            <person name="Mehrle A."/>
            <person name="Schuster C."/>
            <person name="Bahr A."/>
            <person name="Bloecker H."/>
            <person name="Heubner D."/>
            <person name="Hoerlein A."/>
            <person name="Michel G."/>
            <person name="Wedler H."/>
            <person name="Koehrer K."/>
            <person name="Ottenwaelder B."/>
            <person name="Poustka A."/>
            <person name="Wiemann S."/>
            <person name="Schupp I."/>
        </authorList>
    </citation>
    <scope>NUCLEOTIDE SEQUENCE [LARGE SCALE MRNA]</scope>
    <source>
        <tissue>Esophageal carcinoma</tissue>
    </source>
</reference>
<reference key="6">
    <citation type="journal article" date="2004" name="Genome Res.">
        <title>The status, quality, and expansion of the NIH full-length cDNA project: the Mammalian Gene Collection (MGC).</title>
        <authorList>
            <consortium name="The MGC Project Team"/>
        </authorList>
    </citation>
    <scope>NUCLEOTIDE SEQUENCE [LARGE SCALE MRNA]</scope>
    <scope>VARIANT ILE-152</scope>
    <source>
        <tissue>Brain</tissue>
        <tissue>Testis</tissue>
    </source>
</reference>
<reference key="7">
    <citation type="journal article" date="2007" name="Cancer Res.">
        <title>MAGE-A, mMage-b, and MAGE-C proteins form complexes with KAP1 and suppress p53-dependent apoptosis in MAGE-positive cell lines.</title>
        <authorList>
            <person name="Yang B."/>
            <person name="O'Herrin S.M."/>
            <person name="Wu J."/>
            <person name="Reagan-Shaw S."/>
            <person name="Ma Y."/>
            <person name="Bhat K.M."/>
            <person name="Gravekamp C."/>
            <person name="Setaluri V."/>
            <person name="Peters N."/>
            <person name="Hoffmann F.M."/>
            <person name="Peng H."/>
            <person name="Ivanov A.V."/>
            <person name="Simpson A.J."/>
            <person name="Longley B.J."/>
        </authorList>
    </citation>
    <scope>FUNCTION</scope>
</reference>
<reference key="8">
    <citation type="journal article" date="2010" name="Mol. Cell">
        <title>MAGE-RING protein complexes comprise a family of E3 ubiquitin ligases.</title>
        <authorList>
            <person name="Doyle J.M."/>
            <person name="Gao J."/>
            <person name="Wang J."/>
            <person name="Yang M."/>
            <person name="Potts P.R."/>
        </authorList>
    </citation>
    <scope>FUNCTION</scope>
    <scope>INTERACTION WITH TRIM28</scope>
</reference>
<reference key="9">
    <citation type="journal article" date="2019" name="EMBO Rep.">
        <title>Regulation of MAGE-A3/6 by the CRL4-DCAF12 ubiquitin ligase and nutrient availability.</title>
        <authorList>
            <person name="Ravichandran R."/>
            <person name="Kodali K."/>
            <person name="Peng J."/>
            <person name="Potts P.R."/>
        </authorList>
    </citation>
    <scope>FUNCTION</scope>
    <scope>UBIQUITINATION</scope>
</reference>
<reference key="10">
    <citation type="journal article" date="2010" name="Am. J. Hum. Genet.">
        <title>Terminal osseous dysplasia is caused by a single recurrent mutation in the FLNA gene.</title>
        <authorList>
            <person name="Sun Y."/>
            <person name="Almomani R."/>
            <person name="Aten E."/>
            <person name="Celli J."/>
            <person name="van der Heijden J."/>
            <person name="Venselaar H."/>
            <person name="Robertson S.P."/>
            <person name="Baroncini A."/>
            <person name="Franco B."/>
            <person name="Basel-Vanagaite L."/>
            <person name="Horii E."/>
            <person name="Drut R."/>
            <person name="Ariyurek Y."/>
            <person name="den Dunnen J.T."/>
            <person name="Breuning M.H."/>
        </authorList>
    </citation>
    <scope>VARIANT ILE-152</scope>
</reference>
<gene>
    <name evidence="8 11" type="primary">MAGEA6</name>
    <name evidence="9" type="synonym">MAGE6</name>
</gene>
<evidence type="ECO:0000255" key="1">
    <source>
        <dbReference type="PROSITE-ProRule" id="PRU00127"/>
    </source>
</evidence>
<evidence type="ECO:0000256" key="2">
    <source>
        <dbReference type="SAM" id="MobiDB-lite"/>
    </source>
</evidence>
<evidence type="ECO:0000269" key="3">
    <source>
    </source>
</evidence>
<evidence type="ECO:0000269" key="4">
    <source>
    </source>
</evidence>
<evidence type="ECO:0000269" key="5">
    <source>
    </source>
</evidence>
<evidence type="ECO:0000269" key="6">
    <source>
    </source>
</evidence>
<evidence type="ECO:0000269" key="7">
    <source>
    </source>
</evidence>
<evidence type="ECO:0000303" key="8">
    <source>
    </source>
</evidence>
<evidence type="ECO:0000303" key="9">
    <source>
    </source>
</evidence>
<evidence type="ECO:0000305" key="10"/>
<evidence type="ECO:0000312" key="11">
    <source>
        <dbReference type="HGNC" id="HGNC:6804"/>
    </source>
</evidence>
<dbReference type="EMBL" id="U10691">
    <property type="protein sequence ID" value="AAA68875.1"/>
    <property type="molecule type" value="Genomic_DNA"/>
</dbReference>
<dbReference type="EMBL" id="U10339">
    <property type="protein sequence ID" value="AAA19006.1"/>
    <property type="molecule type" value="mRNA"/>
</dbReference>
<dbReference type="EMBL" id="D32076">
    <property type="protein sequence ID" value="BAA06842.1"/>
    <property type="molecule type" value="mRNA"/>
</dbReference>
<dbReference type="EMBL" id="EU161101">
    <property type="protein sequence ID" value="ABW06860.1"/>
    <property type="molecule type" value="mRNA"/>
</dbReference>
<dbReference type="EMBL" id="BX640600">
    <property type="protein sequence ID" value="CAE45706.1"/>
    <property type="molecule type" value="mRNA"/>
</dbReference>
<dbReference type="EMBL" id="BC041599">
    <property type="protein sequence ID" value="AAH41599.1"/>
    <property type="molecule type" value="mRNA"/>
</dbReference>
<dbReference type="EMBL" id="BC067731">
    <property type="protein sequence ID" value="AAH67731.1"/>
    <property type="molecule type" value="mRNA"/>
</dbReference>
<dbReference type="CCDS" id="CCDS76050.1"/>
<dbReference type="PIR" id="JC2360">
    <property type="entry name" value="JC2360"/>
</dbReference>
<dbReference type="RefSeq" id="NP_005354.1">
    <property type="nucleotide sequence ID" value="NM_005363.5"/>
</dbReference>
<dbReference type="RefSeq" id="NP_787064.1">
    <property type="nucleotide sequence ID" value="NM_175868.4"/>
</dbReference>
<dbReference type="RefSeq" id="XP_054189316.1">
    <property type="nucleotide sequence ID" value="XM_054333341.1"/>
</dbReference>
<dbReference type="RefSeq" id="XP_054189317.1">
    <property type="nucleotide sequence ID" value="XM_054333342.1"/>
</dbReference>
<dbReference type="RefSeq" id="XP_054189318.1">
    <property type="nucleotide sequence ID" value="XM_054333343.1"/>
</dbReference>
<dbReference type="SMR" id="P43360"/>
<dbReference type="BioGRID" id="110279">
    <property type="interactions" value="91"/>
</dbReference>
<dbReference type="CORUM" id="P43360"/>
<dbReference type="FunCoup" id="P43360">
    <property type="interactions" value="11"/>
</dbReference>
<dbReference type="IntAct" id="P43360">
    <property type="interactions" value="82"/>
</dbReference>
<dbReference type="MINT" id="P43360"/>
<dbReference type="STRING" id="9606.ENSP00000480637"/>
<dbReference type="iPTMnet" id="P43360"/>
<dbReference type="PhosphoSitePlus" id="P43360"/>
<dbReference type="BioMuta" id="MAGEA6"/>
<dbReference type="DMDM" id="1170860"/>
<dbReference type="jPOST" id="P43360"/>
<dbReference type="MassIVE" id="P43360"/>
<dbReference type="PaxDb" id="9606-ENSP00000480637"/>
<dbReference type="PeptideAtlas" id="P43360"/>
<dbReference type="ProteomicsDB" id="55622"/>
<dbReference type="Antibodypedia" id="30735">
    <property type="antibodies" value="169 antibodies from 29 providers"/>
</dbReference>
<dbReference type="DNASU" id="4105"/>
<dbReference type="Ensembl" id="ENST00000329342.10">
    <property type="protein sequence ID" value="ENSP00000329199.5"/>
    <property type="gene ID" value="ENSG00000197172.11"/>
</dbReference>
<dbReference type="Ensembl" id="ENST00000616035.4">
    <property type="protein sequence ID" value="ENSP00000480637.1"/>
    <property type="gene ID" value="ENSG00000197172.11"/>
</dbReference>
<dbReference type="Ensembl" id="ENST00000710006.1">
    <property type="protein sequence ID" value="ENSP00000517987.1"/>
    <property type="gene ID" value="ENSG00000292195.1"/>
</dbReference>
<dbReference type="Ensembl" id="ENST00000710007.1">
    <property type="protein sequence ID" value="ENSP00000517988.1"/>
    <property type="gene ID" value="ENSG00000292195.1"/>
</dbReference>
<dbReference type="GeneID" id="4105"/>
<dbReference type="KEGG" id="hsa:4105"/>
<dbReference type="MANE-Select" id="ENST00000329342.10">
    <property type="protein sequence ID" value="ENSP00000329199.5"/>
    <property type="RefSeq nucleotide sequence ID" value="NM_005363.5"/>
    <property type="RefSeq protein sequence ID" value="NP_005354.1"/>
</dbReference>
<dbReference type="UCSC" id="uc033fan.1">
    <property type="organism name" value="human"/>
</dbReference>
<dbReference type="AGR" id="HGNC:6804"/>
<dbReference type="CTD" id="4105"/>
<dbReference type="DisGeNET" id="4105"/>
<dbReference type="GeneCards" id="MAGEA6"/>
<dbReference type="HGNC" id="HGNC:6804">
    <property type="gene designation" value="MAGEA6"/>
</dbReference>
<dbReference type="HPA" id="ENSG00000197172">
    <property type="expression patterns" value="Tissue enriched (testis)"/>
</dbReference>
<dbReference type="MIM" id="300176">
    <property type="type" value="gene"/>
</dbReference>
<dbReference type="neXtProt" id="NX_P43360"/>
<dbReference type="OpenTargets" id="ENSG00000197172"/>
<dbReference type="PharmGKB" id="PA30550"/>
<dbReference type="VEuPathDB" id="HostDB:ENSG00000197172"/>
<dbReference type="eggNOG" id="KOG4562">
    <property type="taxonomic scope" value="Eukaryota"/>
</dbReference>
<dbReference type="GeneTree" id="ENSGT00940000164672"/>
<dbReference type="HOGENOM" id="CLU_039582_1_2_1"/>
<dbReference type="InParanoid" id="P43360"/>
<dbReference type="OMA" id="SPLHEWA"/>
<dbReference type="OrthoDB" id="9536323at2759"/>
<dbReference type="PAN-GO" id="P43360">
    <property type="GO annotations" value="3 GO annotations based on evolutionary models"/>
</dbReference>
<dbReference type="PhylomeDB" id="P43360"/>
<dbReference type="TreeFam" id="TF328505"/>
<dbReference type="PathwayCommons" id="P43360"/>
<dbReference type="SignaLink" id="P43360"/>
<dbReference type="SIGNOR" id="P43360"/>
<dbReference type="BioGRID-ORCS" id="4105">
    <property type="hits" value="10 hits in 658 CRISPR screens"/>
</dbReference>
<dbReference type="GenomeRNAi" id="4105"/>
<dbReference type="Pharos" id="P43360">
    <property type="development level" value="Tbio"/>
</dbReference>
<dbReference type="PRO" id="PR:P43360"/>
<dbReference type="Proteomes" id="UP000005640">
    <property type="component" value="Chromosome X"/>
</dbReference>
<dbReference type="RNAct" id="P43360">
    <property type="molecule type" value="protein"/>
</dbReference>
<dbReference type="Bgee" id="ENSG00000197172">
    <property type="expression patterns" value="Expressed in male germ line stem cell (sensu Vertebrata) in testis and 31 other cell types or tissues"/>
</dbReference>
<dbReference type="ExpressionAtlas" id="P43360">
    <property type="expression patterns" value="baseline and differential"/>
</dbReference>
<dbReference type="GO" id="GO:0005634">
    <property type="term" value="C:nucleus"/>
    <property type="evidence" value="ECO:0000318"/>
    <property type="project" value="GO_Central"/>
</dbReference>
<dbReference type="GO" id="GO:0042826">
    <property type="term" value="F:histone deacetylase binding"/>
    <property type="evidence" value="ECO:0000318"/>
    <property type="project" value="GO_Central"/>
</dbReference>
<dbReference type="GO" id="GO:0010507">
    <property type="term" value="P:negative regulation of autophagy"/>
    <property type="evidence" value="ECO:0000314"/>
    <property type="project" value="UniProtKB"/>
</dbReference>
<dbReference type="GO" id="GO:0000122">
    <property type="term" value="P:negative regulation of transcription by RNA polymerase II"/>
    <property type="evidence" value="ECO:0000318"/>
    <property type="project" value="GO_Central"/>
</dbReference>
<dbReference type="FunFam" id="1.10.10.1200:FF:000002">
    <property type="entry name" value="MAGE family member A11"/>
    <property type="match status" value="1"/>
</dbReference>
<dbReference type="FunFam" id="1.10.10.1210:FF:000001">
    <property type="entry name" value="melanoma-associated antigen D1"/>
    <property type="match status" value="1"/>
</dbReference>
<dbReference type="Gene3D" id="1.10.10.1200">
    <property type="entry name" value="MAGE homology domain, winged helix WH1 motif"/>
    <property type="match status" value="1"/>
</dbReference>
<dbReference type="Gene3D" id="1.10.10.1210">
    <property type="entry name" value="MAGE homology domain, winged helix WH2 motif"/>
    <property type="match status" value="1"/>
</dbReference>
<dbReference type="InterPro" id="IPR037445">
    <property type="entry name" value="MAGE"/>
</dbReference>
<dbReference type="InterPro" id="IPR021072">
    <property type="entry name" value="MAGE_N"/>
</dbReference>
<dbReference type="InterPro" id="IPR041898">
    <property type="entry name" value="MAGE_WH1"/>
</dbReference>
<dbReference type="InterPro" id="IPR041899">
    <property type="entry name" value="MAGE_WH2"/>
</dbReference>
<dbReference type="InterPro" id="IPR002190">
    <property type="entry name" value="MHD_dom"/>
</dbReference>
<dbReference type="PANTHER" id="PTHR11736:SF60">
    <property type="entry name" value="MELANOMA-ASSOCIATED ANTIGEN 3-RELATED"/>
    <property type="match status" value="1"/>
</dbReference>
<dbReference type="PANTHER" id="PTHR11736">
    <property type="entry name" value="MELANOMA-ASSOCIATED ANTIGEN MAGE ANTIGEN"/>
    <property type="match status" value="1"/>
</dbReference>
<dbReference type="Pfam" id="PF01454">
    <property type="entry name" value="MAGE"/>
    <property type="match status" value="1"/>
</dbReference>
<dbReference type="Pfam" id="PF12440">
    <property type="entry name" value="MAGE_N"/>
    <property type="match status" value="1"/>
</dbReference>
<dbReference type="SMART" id="SM01373">
    <property type="entry name" value="MAGE"/>
    <property type="match status" value="1"/>
</dbReference>
<dbReference type="SMART" id="SM01392">
    <property type="entry name" value="MAGE_N"/>
    <property type="match status" value="1"/>
</dbReference>
<dbReference type="PROSITE" id="PS50838">
    <property type="entry name" value="MAGE"/>
    <property type="match status" value="1"/>
</dbReference>
<name>MAGA6_HUMAN</name>
<comment type="function">
    <text evidence="4 6 7">Activator of ubiquitin ligase activity of RING-type zinc finger-containing E3 ubiquitin-protein ligases that acts as a repressor of autophagy (PubMed:17942928, PubMed:20864041, PubMed:31267705). May enhance ubiquitin ligase activity of TRIM28 and stimulate p53/TP53 ubiquitination by TRIM28. Proposed to act through recruitment and/or stabilization of the Ubl-conjugating enzyme (E2) at the E3:substrate complex (PubMed:17942928, PubMed:20864041). May play a role in tumor transformation or aspects of tumor progression (PubMed:17942928, PubMed:20864041). In vitro promotes cell viability in melanoma cell lines (PubMed:17942928).</text>
</comment>
<comment type="subunit">
    <text evidence="6">Interacts with TRIM28.</text>
</comment>
<comment type="interaction">
    <interactant intactId="EBI-1045155">
        <id>P43360</id>
    </interactant>
    <interactant intactId="EBI-948905">
        <id>O00154</id>
        <label>ACOT7</label>
    </interactant>
    <organismsDiffer>false</organismsDiffer>
    <experiments>3</experiments>
</comment>
<comment type="interaction">
    <interactant intactId="EBI-1045155">
        <id>P43360</id>
    </interactant>
    <interactant intactId="EBI-12007918">
        <id>O00154-4</id>
        <label>ACOT7</label>
    </interactant>
    <organismsDiffer>false</organismsDiffer>
    <experiments>3</experiments>
</comment>
<comment type="interaction">
    <interactant intactId="EBI-1045155">
        <id>P43360</id>
    </interactant>
    <interactant intactId="EBI-2880652">
        <id>Q08043</id>
        <label>ACTN3</label>
    </interactant>
    <organismsDiffer>false</organismsDiffer>
    <experiments>3</experiments>
</comment>
<comment type="interaction">
    <interactant intactId="EBI-1045155">
        <id>P43360</id>
    </interactant>
    <interactant intactId="EBI-9641546">
        <id>Q99996-2</id>
        <label>AKAP9</label>
    </interactant>
    <organismsDiffer>false</organismsDiffer>
    <experiments>3</experiments>
</comment>
<comment type="interaction">
    <interactant intactId="EBI-1045155">
        <id>P43360</id>
    </interactant>
    <interactant intactId="EBI-10250923">
        <id>Q6NSI1</id>
        <label>ANKRD26P1</label>
    </interactant>
    <organismsDiffer>false</organismsDiffer>
    <experiments>3</experiments>
</comment>
<comment type="interaction">
    <interactant intactId="EBI-1045155">
        <id>P43360</id>
    </interactant>
    <interactant intactId="EBI-1222447">
        <id>P06727</id>
        <label>APOA4</label>
    </interactant>
    <organismsDiffer>false</organismsDiffer>
    <experiments>3</experiments>
</comment>
<comment type="interaction">
    <interactant intactId="EBI-1045155">
        <id>P43360</id>
    </interactant>
    <interactant intactId="EBI-2808808">
        <id>P53367</id>
        <label>ARFIP1</label>
    </interactant>
    <organismsDiffer>false</organismsDiffer>
    <experiments>3</experiments>
</comment>
<comment type="interaction">
    <interactant intactId="EBI-1045155">
        <id>P43360</id>
    </interactant>
    <interactant intactId="EBI-2866142">
        <id>Q32MH5</id>
        <label>ATOSA</label>
    </interactant>
    <organismsDiffer>false</organismsDiffer>
    <experiments>3</experiments>
</comment>
<comment type="interaction">
    <interactant intactId="EBI-1045155">
        <id>P43360</id>
    </interactant>
    <interactant intactId="EBI-711802">
        <id>O75348</id>
        <label>ATP6V1G1</label>
    </interactant>
    <organismsDiffer>false</organismsDiffer>
    <experiments>3</experiments>
</comment>
<comment type="interaction">
    <interactant intactId="EBI-1045155">
        <id>P43360</id>
    </interactant>
    <interactant intactId="EBI-1166928">
        <id>Q8N5M1</id>
        <label>ATPAF2</label>
    </interactant>
    <organismsDiffer>false</organismsDiffer>
    <experiments>9</experiments>
</comment>
<comment type="interaction">
    <interactant intactId="EBI-1045155">
        <id>P43360</id>
    </interactant>
    <interactant intactId="EBI-2560588">
        <id>Q9BQE9</id>
        <label>BCL7B</label>
    </interactant>
    <organismsDiffer>false</organismsDiffer>
    <experiments>6</experiments>
</comment>
<comment type="interaction">
    <interactant intactId="EBI-1045155">
        <id>P43360</id>
    </interactant>
    <interactant intactId="EBI-749204">
        <id>O15155</id>
        <label>BET1</label>
    </interactant>
    <organismsDiffer>false</organismsDiffer>
    <experiments>3</experiments>
</comment>
<comment type="interaction">
    <interactant intactId="EBI-1045155">
        <id>P43360</id>
    </interactant>
    <interactant intactId="EBI-10229433">
        <id>Q13515</id>
        <label>BFSP2</label>
    </interactant>
    <organismsDiffer>false</organismsDiffer>
    <experiments>3</experiments>
</comment>
<comment type="interaction">
    <interactant intactId="EBI-1045155">
        <id>P43360</id>
    </interactant>
    <interactant intactId="EBI-12086950">
        <id>Q53S33</id>
        <label>BOLA3</label>
    </interactant>
    <organismsDiffer>false</organismsDiffer>
    <experiments>3</experiments>
</comment>
<comment type="interaction">
    <interactant intactId="EBI-1045155">
        <id>P43360</id>
    </interactant>
    <interactant intactId="EBI-747505">
        <id>Q8TAB5</id>
        <label>C1orf216</label>
    </interactant>
    <organismsDiffer>false</organismsDiffer>
    <experiments>3</experiments>
</comment>
<comment type="interaction">
    <interactant intactId="EBI-1045155">
        <id>P43360</id>
    </interactant>
    <interactant intactId="EBI-10176008">
        <id>O94983-5</id>
        <label>CAMTA2</label>
    </interactant>
    <organismsDiffer>false</organismsDiffer>
    <experiments>3</experiments>
</comment>
<comment type="interaction">
    <interactant intactId="EBI-1045155">
        <id>P43360</id>
    </interactant>
    <interactant intactId="EBI-11954144">
        <id>O43439-4</id>
        <label>CBFA2T2</label>
    </interactant>
    <organismsDiffer>false</organismsDiffer>
    <experiments>3</experiments>
</comment>
<comment type="interaction">
    <interactant intactId="EBI-1045155">
        <id>P43360</id>
    </interactant>
    <interactant intactId="EBI-10749669">
        <id>Q8IYE0</id>
        <label>CCDC146</label>
    </interactant>
    <organismsDiffer>false</organismsDiffer>
    <experiments>3</experiments>
</comment>
<comment type="interaction">
    <interactant intactId="EBI-1045155">
        <id>P43360</id>
    </interactant>
    <interactant intactId="EBI-10247802">
        <id>Q8IYE0-2</id>
        <label>CCDC146</label>
    </interactant>
    <organismsDiffer>false</organismsDiffer>
    <experiments>3</experiments>
</comment>
<comment type="interaction">
    <interactant intactId="EBI-1045155">
        <id>P43360</id>
    </interactant>
    <interactant intactId="EBI-740814">
        <id>Q8N715</id>
        <label>CCDC185</label>
    </interactant>
    <organismsDiffer>false</organismsDiffer>
    <experiments>3</experiments>
</comment>
<comment type="interaction">
    <interactant intactId="EBI-1045155">
        <id>P43360</id>
    </interactant>
    <interactant intactId="EBI-1104933">
        <id>Q8N4L8</id>
        <label>CCDC24</label>
    </interactant>
    <organismsDiffer>false</organismsDiffer>
    <experiments>3</experiments>
</comment>
<comment type="interaction">
    <interactant intactId="EBI-1045155">
        <id>P43360</id>
    </interactant>
    <interactant intactId="EBI-10238077">
        <id>Q16619</id>
        <label>CTF1</label>
    </interactant>
    <organismsDiffer>false</organismsDiffer>
    <experiments>3</experiments>
</comment>
<comment type="interaction">
    <interactant intactId="EBI-1045155">
        <id>P43360</id>
    </interactant>
    <interactant intactId="EBI-12276476">
        <id>Q16619-2</id>
        <label>CTF1</label>
    </interactant>
    <organismsDiffer>false</organismsDiffer>
    <experiments>3</experiments>
</comment>
<comment type="interaction">
    <interactant intactId="EBI-1045155">
        <id>P43360</id>
    </interactant>
    <interactant intactId="EBI-25840379">
        <id>Q14203-5</id>
        <label>DCTN1</label>
    </interactant>
    <organismsDiffer>false</organismsDiffer>
    <experiments>3</experiments>
</comment>
<comment type="interaction">
    <interactant intactId="EBI-1045155">
        <id>P43360</id>
    </interactant>
    <interactant intactId="EBI-1752541">
        <id>O95886</id>
        <label>DLGAP3</label>
    </interactant>
    <organismsDiffer>false</organismsDiffer>
    <experiments>3</experiments>
</comment>
<comment type="interaction">
    <interactant intactId="EBI-1045155">
        <id>P43360</id>
    </interactant>
    <interactant intactId="EBI-12000556">
        <id>Q9Y2H0-1</id>
        <label>DLGAP4</label>
    </interactant>
    <organismsDiffer>false</organismsDiffer>
    <experiments>3</experiments>
</comment>
<comment type="interaction">
    <interactant intactId="EBI-1045155">
        <id>P43360</id>
    </interactant>
    <interactant intactId="EBI-2795449">
        <id>Q9H147</id>
        <label>DNTTIP1</label>
    </interactant>
    <organismsDiffer>false</organismsDiffer>
    <experiments>3</experiments>
</comment>
<comment type="interaction">
    <interactant intactId="EBI-1045155">
        <id>P43360</id>
    </interactant>
    <interactant intactId="EBI-10285740">
        <id>Q96FG2</id>
        <label>ELMOD3</label>
    </interactant>
    <organismsDiffer>false</organismsDiffer>
    <experiments>3</experiments>
</comment>
<comment type="interaction">
    <interactant intactId="EBI-1045155">
        <id>P43360</id>
    </interactant>
    <interactant intactId="EBI-949824">
        <id>O00471</id>
        <label>EXOC5</label>
    </interactant>
    <organismsDiffer>false</organismsDiffer>
    <experiments>6</experiments>
</comment>
<comment type="interaction">
    <interactant intactId="EBI-1045155">
        <id>P43360</id>
    </interactant>
    <interactant intactId="EBI-10245120">
        <id>Q5SYB0</id>
        <label>FRMPD1</label>
    </interactant>
    <organismsDiffer>false</organismsDiffer>
    <experiments>3</experiments>
</comment>
<comment type="interaction">
    <interactant intactId="EBI-1045155">
        <id>P43360</id>
    </interactant>
    <interactant intactId="EBI-372506">
        <id>Q8TAE8</id>
        <label>GADD45GIP1</label>
    </interactant>
    <organismsDiffer>false</organismsDiffer>
    <experiments>3</experiments>
</comment>
<comment type="interaction">
    <interactant intactId="EBI-1045155">
        <id>P43360</id>
    </interactant>
    <interactant intactId="EBI-715444">
        <id>P23434</id>
        <label>GCSH</label>
    </interactant>
    <organismsDiffer>false</organismsDiffer>
    <experiments>3</experiments>
</comment>
<comment type="interaction">
    <interactant intactId="EBI-1045155">
        <id>P43360</id>
    </interactant>
    <interactant intactId="EBI-8799578">
        <id>Q9NXC2</id>
        <label>GFOD1</label>
    </interactant>
    <organismsDiffer>false</organismsDiffer>
    <experiments>6</experiments>
</comment>
<comment type="interaction">
    <interactant intactId="EBI-1045155">
        <id>P43360</id>
    </interactant>
    <interactant intactId="EBI-2514791">
        <id>Q96CS2</id>
        <label>HAUS1</label>
    </interactant>
    <organismsDiffer>false</organismsDiffer>
    <experiments>3</experiments>
</comment>
<comment type="interaction">
    <interactant intactId="EBI-1045155">
        <id>P43360</id>
    </interactant>
    <interactant intactId="EBI-486809">
        <id>P52272</id>
        <label>HNRNPM</label>
    </interactant>
    <organismsDiffer>false</organismsDiffer>
    <experiments>3</experiments>
</comment>
<comment type="interaction">
    <interactant intactId="EBI-1045155">
        <id>P43360</id>
    </interactant>
    <interactant intactId="EBI-10220600">
        <id>Q8NA54</id>
        <label>IQUB</label>
    </interactant>
    <organismsDiffer>false</organismsDiffer>
    <experiments>3</experiments>
</comment>
<comment type="interaction">
    <interactant intactId="EBI-1045155">
        <id>P43360</id>
    </interactant>
    <interactant intactId="EBI-7950718">
        <id>Q86VH2</id>
        <label>KIF27</label>
    </interactant>
    <organismsDiffer>false</organismsDiffer>
    <experiments>3</experiments>
</comment>
<comment type="interaction">
    <interactant intactId="EBI-1045155">
        <id>P43360</id>
    </interactant>
    <interactant intactId="EBI-6426443">
        <id>Q2WGJ6</id>
        <label>KLHL38</label>
    </interactant>
    <organismsDiffer>false</organismsDiffer>
    <experiments>6</experiments>
</comment>
<comment type="interaction">
    <interactant intactId="EBI-1045155">
        <id>P43360</id>
    </interactant>
    <interactant intactId="EBI-7138654">
        <id>Q8N3X6</id>
        <label>LCORL</label>
    </interactant>
    <organismsDiffer>false</organismsDiffer>
    <experiments>3</experiments>
</comment>
<comment type="interaction">
    <interactant intactId="EBI-1045155">
        <id>P43360</id>
    </interactant>
    <interactant intactId="EBI-12111580">
        <id>Q8N3X6-3</id>
        <label>LCORL</label>
    </interactant>
    <organismsDiffer>false</organismsDiffer>
    <experiments>3</experiments>
</comment>
<comment type="interaction">
    <interactant intactId="EBI-1045155">
        <id>P43360</id>
    </interactant>
    <interactant intactId="EBI-748884">
        <id>Q96GY3</id>
        <label>LIN37</label>
    </interactant>
    <organismsDiffer>false</organismsDiffer>
    <experiments>6</experiments>
</comment>
<comment type="interaction">
    <interactant intactId="EBI-1045155">
        <id>P43360</id>
    </interactant>
    <interactant intactId="EBI-1389456">
        <id>Q52LA3</id>
        <label>LIN52</label>
    </interactant>
    <organismsDiffer>false</organismsDiffer>
    <experiments>3</experiments>
</comment>
<comment type="interaction">
    <interactant intactId="EBI-1045155">
        <id>P43360</id>
    </interactant>
    <interactant intactId="EBI-347416">
        <id>Q9Y333</id>
        <label>LSM2</label>
    </interactant>
    <organismsDiffer>false</organismsDiffer>
    <experiments>6</experiments>
</comment>
<comment type="interaction">
    <interactant intactId="EBI-1045155">
        <id>P43360</id>
    </interactant>
    <interactant intactId="EBI-348259">
        <id>Q96EZ8</id>
        <label>MCRS1</label>
    </interactant>
    <organismsDiffer>false</organismsDiffer>
    <experiments>3</experiments>
</comment>
<comment type="interaction">
    <interactant intactId="EBI-1045155">
        <id>P43360</id>
    </interactant>
    <interactant intactId="EBI-16431233">
        <id>A0A0S2Z545</id>
        <label>MED21</label>
    </interactant>
    <organismsDiffer>false</organismsDiffer>
    <experiments>3</experiments>
</comment>
<comment type="interaction">
    <interactant intactId="EBI-1045155">
        <id>P43360</id>
    </interactant>
    <interactant intactId="EBI-14086479">
        <id>Q8IVT4</id>
        <label>MGC50722</label>
    </interactant>
    <organismsDiffer>false</organismsDiffer>
    <experiments>3</experiments>
</comment>
<comment type="interaction">
    <interactant intactId="EBI-1045155">
        <id>P43360</id>
    </interactant>
    <interactant intactId="EBI-10172526">
        <id>Q9UJV3-2</id>
        <label>MID2</label>
    </interactant>
    <organismsDiffer>false</organismsDiffer>
    <experiments>3</experiments>
</comment>
<comment type="interaction">
    <interactant intactId="EBI-1045155">
        <id>P43360</id>
    </interactant>
    <interactant intactId="EBI-2548751">
        <id>Q8TD10</id>
        <label>MIPOL1</label>
    </interactant>
    <organismsDiffer>false</organismsDiffer>
    <experiments>6</experiments>
</comment>
<comment type="interaction">
    <interactant intactId="EBI-1045155">
        <id>P43360</id>
    </interactant>
    <interactant intactId="EBI-9675802">
        <id>Q6PF18</id>
        <label>MORN3</label>
    </interactant>
    <organismsDiffer>false</organismsDiffer>
    <experiments>6</experiments>
</comment>
<comment type="interaction">
    <interactant intactId="EBI-1045155">
        <id>P43360</id>
    </interactant>
    <interactant intactId="EBI-11991020">
        <id>A6NI15</id>
        <label>MSGN1</label>
    </interactant>
    <organismsDiffer>false</organismsDiffer>
    <experiments>3</experiments>
</comment>
<comment type="interaction">
    <interactant intactId="EBI-1045155">
        <id>P43360</id>
    </interactant>
    <interactant intactId="EBI-713635">
        <id>O43639</id>
        <label>NCK2</label>
    </interactant>
    <organismsDiffer>false</organismsDiffer>
    <experiments>6</experiments>
</comment>
<comment type="interaction">
    <interactant intactId="EBI-1045155">
        <id>P43360</id>
    </interactant>
    <interactant intactId="EBI-12280006">
        <id>Q8IVI9-3</id>
        <label>NOSTRIN</label>
    </interactant>
    <organismsDiffer>false</organismsDiffer>
    <experiments>3</experiments>
</comment>
<comment type="interaction">
    <interactant intactId="EBI-1045155">
        <id>P43360</id>
    </interactant>
    <interactant intactId="EBI-634289">
        <id>Q9H0N5</id>
        <label>PCBD2</label>
    </interactant>
    <organismsDiffer>false</organismsDiffer>
    <experiments>3</experiments>
</comment>
<comment type="interaction">
    <interactant intactId="EBI-1045155">
        <id>P43360</id>
    </interactant>
    <interactant intactId="EBI-1642831">
        <id>Q08499</id>
        <label>PDE4D</label>
    </interactant>
    <organismsDiffer>false</organismsDiffer>
    <experiments>3</experiments>
</comment>
<comment type="interaction">
    <interactant intactId="EBI-1045155">
        <id>P43360</id>
    </interactant>
    <interactant intactId="EBI-6912267">
        <id>A6NK89</id>
        <label>RASSF10</label>
    </interactant>
    <organismsDiffer>false</organismsDiffer>
    <experiments>3</experiments>
</comment>
<comment type="interaction">
    <interactant intactId="EBI-1045155">
        <id>P43360</id>
    </interactant>
    <interactant intactId="EBI-2933362">
        <id>Q9H2L5</id>
        <label>RASSF4</label>
    </interactant>
    <organismsDiffer>false</organismsDiffer>
    <experiments>6</experiments>
</comment>
<comment type="interaction">
    <interactant intactId="EBI-1045155">
        <id>P43360</id>
    </interactant>
    <interactant intactId="EBI-743428">
        <id>Q9P2K3</id>
        <label>RCOR3</label>
    </interactant>
    <organismsDiffer>false</organismsDiffer>
    <experiments>3</experiments>
</comment>
<comment type="interaction">
    <interactant intactId="EBI-1045155">
        <id>P43360</id>
    </interactant>
    <interactant intactId="EBI-1504830">
        <id>Q9P2K3-2</id>
        <label>RCOR3</label>
    </interactant>
    <organismsDiffer>false</organismsDiffer>
    <experiments>3</experiments>
</comment>
<comment type="interaction">
    <interactant intactId="EBI-1045155">
        <id>P43360</id>
    </interactant>
    <interactant intactId="EBI-745810">
        <id>Q96EN9</id>
        <label>REX1BD</label>
    </interactant>
    <organismsDiffer>false</organismsDiffer>
    <experiments>3</experiments>
</comment>
<comment type="interaction">
    <interactant intactId="EBI-1045155">
        <id>P43360</id>
    </interactant>
    <interactant intactId="EBI-356793">
        <id>P61513</id>
        <label>RPL37A</label>
    </interactant>
    <organismsDiffer>false</organismsDiffer>
    <experiments>6</experiments>
</comment>
<comment type="interaction">
    <interactant intactId="EBI-1045155">
        <id>P43360</id>
    </interactant>
    <interactant intactId="EBI-6257312">
        <id>Q9BVN2</id>
        <label>RUSC1</label>
    </interactant>
    <organismsDiffer>false</organismsDiffer>
    <experiments>3</experiments>
</comment>
<comment type="interaction">
    <interactant intactId="EBI-1045155">
        <id>P43360</id>
    </interactant>
    <interactant intactId="EBI-751842">
        <id>Q9HCY8</id>
        <label>S100A14</label>
    </interactant>
    <organismsDiffer>false</organismsDiffer>
    <experiments>3</experiments>
</comment>
<comment type="interaction">
    <interactant intactId="EBI-1045155">
        <id>P43360</id>
    </interactant>
    <interactant intactId="EBI-1055001">
        <id>P06702</id>
        <label>S100A9</label>
    </interactant>
    <organismsDiffer>false</organismsDiffer>
    <experiments>3</experiments>
</comment>
<comment type="interaction">
    <interactant intactId="EBI-1045155">
        <id>P43360</id>
    </interactant>
    <interactant intactId="EBI-747035">
        <id>Q9H788</id>
        <label>SH2D4A</label>
    </interactant>
    <organismsDiffer>false</organismsDiffer>
    <experiments>6</experiments>
</comment>
<comment type="interaction">
    <interactant intactId="EBI-1045155">
        <id>P43360</id>
    </interactant>
    <interactant intactId="EBI-358489">
        <id>Q96GM5</id>
        <label>SMARCD1</label>
    </interactant>
    <organismsDiffer>false</organismsDiffer>
    <experiments>3</experiments>
</comment>
<comment type="interaction">
    <interactant intactId="EBI-1045155">
        <id>P43360</id>
    </interactant>
    <interactant intactId="EBI-10244848">
        <id>Q5SQN1</id>
        <label>SNAP47</label>
    </interactant>
    <organismsDiffer>false</organismsDiffer>
    <experiments>3</experiments>
</comment>
<comment type="interaction">
    <interactant intactId="EBI-1045155">
        <id>P43360</id>
    </interactant>
    <interactant intactId="EBI-724909">
        <id>O95219</id>
        <label>SNX4</label>
    </interactant>
    <organismsDiffer>false</organismsDiffer>
    <experiments>3</experiments>
</comment>
<comment type="interaction">
    <interactant intactId="EBI-1045155">
        <id>P43360</id>
    </interactant>
    <interactant intactId="EBI-745021">
        <id>Q96FJ0</id>
        <label>STAMBPL1</label>
    </interactant>
    <organismsDiffer>false</organismsDiffer>
    <experiments>6</experiments>
</comment>
<comment type="interaction">
    <interactant intactId="EBI-1045155">
        <id>P43360</id>
    </interactant>
    <interactant intactId="EBI-714206">
        <id>Q13190</id>
        <label>STX5</label>
    </interactant>
    <organismsDiffer>false</organismsDiffer>
    <experiments>3</experiments>
</comment>
<comment type="interaction">
    <interactant intactId="EBI-1045155">
        <id>P43360</id>
    </interactant>
    <interactant intactId="EBI-2341136">
        <id>Q12899</id>
        <label>TRIM26</label>
    </interactant>
    <organismsDiffer>false</organismsDiffer>
    <experiments>4</experiments>
</comment>
<comment type="interaction">
    <interactant intactId="EBI-1045155">
        <id>P43360</id>
    </interactant>
    <interactant intactId="EBI-78139">
        <id>Q13263</id>
        <label>TRIM28</label>
    </interactant>
    <organismsDiffer>false</organismsDiffer>
    <experiments>2</experiments>
</comment>
<comment type="interaction">
    <interactant intactId="EBI-1045155">
        <id>P43360</id>
    </interactant>
    <interactant intactId="EBI-12023322">
        <id>Q8N831</id>
        <label>TSPYL6</label>
    </interactant>
    <organismsDiffer>false</organismsDiffer>
    <experiments>3</experiments>
</comment>
<comment type="interaction">
    <interactant intactId="EBI-1045155">
        <id>P43360</id>
    </interactant>
    <interactant intactId="EBI-5357290">
        <id>O75386</id>
        <label>TULP3</label>
    </interactant>
    <organismsDiffer>false</organismsDiffer>
    <experiments>7</experiments>
</comment>
<comment type="interaction">
    <interactant intactId="EBI-1045155">
        <id>P43360</id>
    </interactant>
    <interactant intactId="EBI-707554">
        <id>O14530</id>
        <label>TXNDC9</label>
    </interactant>
    <organismsDiffer>false</organismsDiffer>
    <experiments>4</experiments>
</comment>
<comment type="interaction">
    <interactant intactId="EBI-1045155">
        <id>P43360</id>
    </interactant>
    <interactant intactId="EBI-717592">
        <id>Q13426</id>
        <label>XRCC4</label>
    </interactant>
    <organismsDiffer>false</organismsDiffer>
    <experiments>3</experiments>
</comment>
<comment type="interaction">
    <interactant intactId="EBI-1045155">
        <id>P43360</id>
    </interactant>
    <interactant intactId="EBI-7254550">
        <id>P36508</id>
        <label>ZNF76</label>
    </interactant>
    <organismsDiffer>false</organismsDiffer>
    <experiments>3</experiments>
</comment>
<comment type="interaction">
    <interactant intactId="EBI-1045155">
        <id>P43360</id>
    </interactant>
    <interactant intactId="EBI-17900348">
        <id>Q6ZRV7</id>
    </interactant>
    <organismsDiffer>false</organismsDiffer>
    <experiments>3</experiments>
</comment>
<comment type="interaction">
    <interactant intactId="EBI-1045155">
        <id>P43360</id>
    </interactant>
    <interactant intactId="EBI-12418810">
        <id>Q9BS57</id>
    </interactant>
    <organismsDiffer>false</organismsDiffer>
    <experiments>3</experiments>
</comment>
<comment type="tissue specificity">
    <text>Expressed in many tumors of several types, such as melanoma, head and neck squamous cell carcinoma, lung carcinoma and breast carcinoma, but not in normal tissues except for testes.</text>
</comment>
<comment type="PTM">
    <text evidence="7">Ubiquitinated by the DCX(DCAF12) complex specifically recognizes the diglutamate (Glu-Glu) at the C-terminus, leading to its degradation.</text>
</comment>
<comment type="caution">
    <text evidence="4">In vitro experiments measuring cell viability in melanoma cell lines used siRNA specific for MAGEA3 and MAGEA6.</text>
</comment>
<sequence length="314" mass="34891">MPLEQRSQHCKPEEGLEARGEALGLVGAQAPATEEQEAASSSSTLVEVTLGEVPAAESPDPPQSPQGASSLPTTMNYPLWSQSYEDSSNQEEEGPSTFPDLESEFQAALSRKVAKLVHFLLLKYRAREPVTKAEMLGSVVGNWQYFFPVIFSKASDSLQLVFGIELMEVDPIGHVYIFATCLGLSYDGLLGDNQIMPKTGFLIIILAIIAKEGDCAPEEKIWEELSVLEVFEGREDSIFGDPKKLLTQYFVQENYLEYRQVPGSDPACYEFLWGPRALIETSYVKVLHHMVKISGGPRISYPLLHEWALREGEE</sequence>
<keyword id="KW-1267">Proteomics identification</keyword>
<keyword id="KW-1185">Reference proteome</keyword>
<keyword id="KW-0825">Tumor antigen</keyword>
<keyword id="KW-0832">Ubl conjugation</keyword>
<keyword id="KW-0833">Ubl conjugation pathway</keyword>
<feature type="chain" id="PRO_0000156706" description="Melanoma-associated antigen 6">
    <location>
        <begin position="1"/>
        <end position="314"/>
    </location>
</feature>
<feature type="domain" description="MAGE" evidence="1">
    <location>
        <begin position="109"/>
        <end position="308"/>
    </location>
</feature>
<feature type="region of interest" description="Disordered" evidence="2">
    <location>
        <begin position="1"/>
        <end position="99"/>
    </location>
</feature>
<feature type="compositionally biased region" description="Basic and acidic residues" evidence="2">
    <location>
        <begin position="1"/>
        <end position="20"/>
    </location>
</feature>
<feature type="compositionally biased region" description="Low complexity" evidence="2">
    <location>
        <begin position="21"/>
        <end position="44"/>
    </location>
</feature>
<feature type="compositionally biased region" description="Polar residues" evidence="2">
    <location>
        <begin position="65"/>
        <end position="87"/>
    </location>
</feature>
<feature type="sequence variant" id="VAR_053493" description="In dbSNP:rs7056365." evidence="3 5">
    <original>S</original>
    <variation>I</variation>
    <location>
        <position position="152"/>
    </location>
</feature>
<accession>P43360</accession>
<accession>A8IF93</accession>
<accession>Q6NW44</accession>